<evidence type="ECO:0000305" key="1"/>
<sequence length="171" mass="18698">MTNFTFDGAHSSLEFQIKHLMVSKVKGSFDQFDVAVEGDINDFSTLKATATIIPSSINTKNEARDNHLKSGDFFGTDEFDKITFETKSVTENKVVGDLTIKGITNEETFDVEFNGVSKNPMDGSQVTGVIVTGTINRENYGINFNQALETGGVMLGKDVKFEASAEFSISE</sequence>
<feature type="chain" id="PRO_0000299511" description="UPF0312 protein SAV2687">
    <location>
        <begin position="1"/>
        <end position="171"/>
    </location>
</feature>
<name>Y2687_STAAM</name>
<organism>
    <name type="scientific">Staphylococcus aureus (strain Mu50 / ATCC 700699)</name>
    <dbReference type="NCBI Taxonomy" id="158878"/>
    <lineage>
        <taxon>Bacteria</taxon>
        <taxon>Bacillati</taxon>
        <taxon>Bacillota</taxon>
        <taxon>Bacilli</taxon>
        <taxon>Bacillales</taxon>
        <taxon>Staphylococcaceae</taxon>
        <taxon>Staphylococcus</taxon>
    </lineage>
</organism>
<comment type="similarity">
    <text evidence="1">Belongs to the UPF0312 family.</text>
</comment>
<gene>
    <name type="ordered locus">SAV2687</name>
</gene>
<proteinExistence type="inferred from homology"/>
<accession>Q99QV4</accession>
<protein>
    <recommendedName>
        <fullName>UPF0312 protein SAV2687</fullName>
    </recommendedName>
</protein>
<reference key="1">
    <citation type="journal article" date="2001" name="Lancet">
        <title>Whole genome sequencing of meticillin-resistant Staphylococcus aureus.</title>
        <authorList>
            <person name="Kuroda M."/>
            <person name="Ohta T."/>
            <person name="Uchiyama I."/>
            <person name="Baba T."/>
            <person name="Yuzawa H."/>
            <person name="Kobayashi I."/>
            <person name="Cui L."/>
            <person name="Oguchi A."/>
            <person name="Aoki K."/>
            <person name="Nagai Y."/>
            <person name="Lian J.-Q."/>
            <person name="Ito T."/>
            <person name="Kanamori M."/>
            <person name="Matsumaru H."/>
            <person name="Maruyama A."/>
            <person name="Murakami H."/>
            <person name="Hosoyama A."/>
            <person name="Mizutani-Ui Y."/>
            <person name="Takahashi N.K."/>
            <person name="Sawano T."/>
            <person name="Inoue R."/>
            <person name="Kaito C."/>
            <person name="Sekimizu K."/>
            <person name="Hirakawa H."/>
            <person name="Kuhara S."/>
            <person name="Goto S."/>
            <person name="Yabuzaki J."/>
            <person name="Kanehisa M."/>
            <person name="Yamashita A."/>
            <person name="Oshima K."/>
            <person name="Furuya K."/>
            <person name="Yoshino C."/>
            <person name="Shiba T."/>
            <person name="Hattori M."/>
            <person name="Ogasawara N."/>
            <person name="Hayashi H."/>
            <person name="Hiramatsu K."/>
        </authorList>
    </citation>
    <scope>NUCLEOTIDE SEQUENCE [LARGE SCALE GENOMIC DNA]</scope>
    <source>
        <strain>Mu50 / ATCC 700699</strain>
    </source>
</reference>
<dbReference type="EMBL" id="BA000017">
    <property type="protein sequence ID" value="BAB58849.1"/>
    <property type="molecule type" value="Genomic_DNA"/>
</dbReference>
<dbReference type="RefSeq" id="WP_000181124.1">
    <property type="nucleotide sequence ID" value="NC_002758.2"/>
</dbReference>
<dbReference type="SMR" id="Q99QV4"/>
<dbReference type="KEGG" id="sav:SAV2687"/>
<dbReference type="HOGENOM" id="CLU_071003_3_0_9"/>
<dbReference type="PhylomeDB" id="Q99QV4"/>
<dbReference type="Proteomes" id="UP000002481">
    <property type="component" value="Chromosome"/>
</dbReference>
<dbReference type="Gene3D" id="2.40.128.110">
    <property type="entry name" value="Lipid/polyisoprenoid-binding, YceI-like"/>
    <property type="match status" value="1"/>
</dbReference>
<dbReference type="InterPro" id="IPR007372">
    <property type="entry name" value="Lipid/polyisoprenoid-bd_YceI"/>
</dbReference>
<dbReference type="InterPro" id="IPR036761">
    <property type="entry name" value="TTHA0802/YceI-like_sf"/>
</dbReference>
<dbReference type="PANTHER" id="PTHR34406">
    <property type="entry name" value="PROTEIN YCEI"/>
    <property type="match status" value="1"/>
</dbReference>
<dbReference type="PANTHER" id="PTHR34406:SF1">
    <property type="entry name" value="PROTEIN YCEI"/>
    <property type="match status" value="1"/>
</dbReference>
<dbReference type="Pfam" id="PF04264">
    <property type="entry name" value="YceI"/>
    <property type="match status" value="1"/>
</dbReference>
<dbReference type="SMART" id="SM00867">
    <property type="entry name" value="YceI"/>
    <property type="match status" value="1"/>
</dbReference>
<dbReference type="SUPFAM" id="SSF101874">
    <property type="entry name" value="YceI-like"/>
    <property type="match status" value="1"/>
</dbReference>